<keyword id="KW-0535">Nitrogen fixation</keyword>
<keyword id="KW-1185">Reference proteome</keyword>
<organism>
    <name type="scientific">Nostoc sp. (strain PCC 7120 / SAG 25.82 / UTEX 2576)</name>
    <dbReference type="NCBI Taxonomy" id="103690"/>
    <lineage>
        <taxon>Bacteria</taxon>
        <taxon>Bacillati</taxon>
        <taxon>Cyanobacteriota</taxon>
        <taxon>Cyanophyceae</taxon>
        <taxon>Nostocales</taxon>
        <taxon>Nostocaceae</taxon>
        <taxon>Nostoc</taxon>
    </lineage>
</organism>
<gene>
    <name type="ordered locus">asl1434</name>
</gene>
<comment type="similarity">
    <text evidence="1">Belongs to the UPF0437 family.</text>
</comment>
<protein>
    <recommendedName>
        <fullName>UPF0437 protein asl1434</fullName>
    </recommendedName>
</protein>
<reference key="1">
    <citation type="submission" date="1996-01" db="EMBL/GenBank/DDBJ databases">
        <authorList>
            <person name="Buikema W.J."/>
            <person name="Scappino L.A."/>
            <person name="Haselkorn R."/>
        </authorList>
    </citation>
    <scope>NUCLEOTIDE SEQUENCE [GENOMIC DNA]</scope>
</reference>
<reference key="2">
    <citation type="journal article" date="2001" name="DNA Res.">
        <title>Complete genomic sequence of the filamentous nitrogen-fixing cyanobacterium Anabaena sp. strain PCC 7120.</title>
        <authorList>
            <person name="Kaneko T."/>
            <person name="Nakamura Y."/>
            <person name="Wolk C.P."/>
            <person name="Kuritz T."/>
            <person name="Sasamoto S."/>
            <person name="Watanabe A."/>
            <person name="Iriguchi M."/>
            <person name="Ishikawa A."/>
            <person name="Kawashima K."/>
            <person name="Kimura T."/>
            <person name="Kishida Y."/>
            <person name="Kohara M."/>
            <person name="Matsumoto M."/>
            <person name="Matsuno A."/>
            <person name="Muraki A."/>
            <person name="Nakazaki N."/>
            <person name="Shimpo S."/>
            <person name="Sugimoto M."/>
            <person name="Takazawa M."/>
            <person name="Yamada M."/>
            <person name="Yasuda M."/>
            <person name="Tabata S."/>
        </authorList>
    </citation>
    <scope>NUCLEOTIDE SEQUENCE [LARGE SCALE GENOMIC DNA]</scope>
    <source>
        <strain>PCC 7120 / SAG 25.82 / UTEX 2576</strain>
    </source>
</reference>
<proteinExistence type="inferred from homology"/>
<feature type="chain" id="PRO_0000208890" description="UPF0437 protein asl1434">
    <location>
        <begin position="1"/>
        <end position="71"/>
    </location>
</feature>
<dbReference type="EMBL" id="U47055">
    <property type="protein sequence ID" value="AAA87951.1"/>
    <property type="molecule type" value="Genomic_DNA"/>
</dbReference>
<dbReference type="EMBL" id="BA000019">
    <property type="protein sequence ID" value="BAB73391.1"/>
    <property type="molecule type" value="Genomic_DNA"/>
</dbReference>
<dbReference type="PIR" id="AG1985">
    <property type="entry name" value="AG1985"/>
</dbReference>
<dbReference type="RefSeq" id="WP_010995606.1">
    <property type="nucleotide sequence ID" value="NZ_RSCN01000040.1"/>
</dbReference>
<dbReference type="SMR" id="Q44148"/>
<dbReference type="STRING" id="103690.gene:10493449"/>
<dbReference type="KEGG" id="ana:asl1434"/>
<dbReference type="eggNOG" id="COG5420">
    <property type="taxonomic scope" value="Bacteria"/>
</dbReference>
<dbReference type="OrthoDB" id="3216579at2"/>
<dbReference type="Proteomes" id="UP000002483">
    <property type="component" value="Chromosome"/>
</dbReference>
<dbReference type="GO" id="GO:0009399">
    <property type="term" value="P:nitrogen fixation"/>
    <property type="evidence" value="ECO:0007669"/>
    <property type="project" value="UniProtKB-KW"/>
</dbReference>
<dbReference type="Gene3D" id="1.10.287.660">
    <property type="entry name" value="Helix hairpin bin"/>
    <property type="match status" value="1"/>
</dbReference>
<dbReference type="InterPro" id="IPR029012">
    <property type="entry name" value="Helix_hairpin_bin_sf"/>
</dbReference>
<dbReference type="InterPro" id="IPR007774">
    <property type="entry name" value="Put_N_fixation"/>
</dbReference>
<dbReference type="Pfam" id="PF05082">
    <property type="entry name" value="Rop-like"/>
    <property type="match status" value="1"/>
</dbReference>
<dbReference type="PIRSF" id="PIRSF037676">
    <property type="entry name" value="DUF683"/>
    <property type="match status" value="1"/>
</dbReference>
<sequence length="71" mass="8228">MQVEETSIEEIQTKIKRLNSKAGQMKMDLHDLAEGLPTDYTQLMDVAAATYEIYRQLDELKQELKKLENAK</sequence>
<name>Y1434_NOSS1</name>
<evidence type="ECO:0000305" key="1"/>
<accession>Q44148</accession>